<feature type="chain" id="PRO_0000114245" description="Chromosomal replication initiator protein DnaA">
    <location>
        <begin position="1"/>
        <end position="472"/>
    </location>
</feature>
<feature type="region of interest" description="Domain I, interacts with DnaA modulators" evidence="1">
    <location>
        <begin position="1"/>
        <end position="73"/>
    </location>
</feature>
<feature type="region of interest" description="Domain II" evidence="1">
    <location>
        <begin position="73"/>
        <end position="128"/>
    </location>
</feature>
<feature type="region of interest" description="Disordered" evidence="2">
    <location>
        <begin position="90"/>
        <end position="124"/>
    </location>
</feature>
<feature type="region of interest" description="Domain III, AAA+ region" evidence="1">
    <location>
        <begin position="129"/>
        <end position="351"/>
    </location>
</feature>
<feature type="region of interest" description="Domain IV, binds dsDNA" evidence="1">
    <location>
        <begin position="352"/>
        <end position="472"/>
    </location>
</feature>
<feature type="compositionally biased region" description="Basic and acidic residues" evidence="2">
    <location>
        <begin position="99"/>
        <end position="109"/>
    </location>
</feature>
<feature type="compositionally biased region" description="Polar residues" evidence="2">
    <location>
        <begin position="110"/>
        <end position="119"/>
    </location>
</feature>
<feature type="binding site" evidence="1">
    <location>
        <position position="176"/>
    </location>
    <ligand>
        <name>ATP</name>
        <dbReference type="ChEBI" id="CHEBI:30616"/>
    </ligand>
</feature>
<feature type="binding site" evidence="1">
    <location>
        <position position="178"/>
    </location>
    <ligand>
        <name>ATP</name>
        <dbReference type="ChEBI" id="CHEBI:30616"/>
    </ligand>
</feature>
<feature type="binding site" evidence="1">
    <location>
        <position position="179"/>
    </location>
    <ligand>
        <name>ATP</name>
        <dbReference type="ChEBI" id="CHEBI:30616"/>
    </ligand>
</feature>
<feature type="binding site" evidence="1">
    <location>
        <position position="180"/>
    </location>
    <ligand>
        <name>ATP</name>
        <dbReference type="ChEBI" id="CHEBI:30616"/>
    </ligand>
</feature>
<name>DNAA_RHOPA</name>
<sequence length="472" mass="52624">MSNMEQDRWSRVKGRLRSSVGEDVYSSWFARMDLESVHDESVHLSVPTRFLKSWIQTHYSDKVLSCWQAELPEVNRVDLTVRSPVRCATPAKEVPAPVESRRDEQRPSAERSNGATPVSANHDALGGSPLDPRLTFASFVVGRSNTLAHAAAKQVAEGRRGDPVMFNPLYIHSGVGLGKTHLLQAVTWAGNAGTERKVLYLTAEKFMYGFVAALKTQTSLAFKEALRGIDVLVIDDLQFLQGKTTQAEFCHTLNALIDAGRQVVVAADRPPADLESLDERVRSRLAGGLVVEMAPLGEDLRLGILRSRVVAARTHHASFDVPQPVLEYLARTITHNGRDLEGAINRLLAHSKLNNQPVTLEMAEHEVRDLIRPSEPKRIKIEDIQRIVARQYNVSRSDLLSSRRTANVVRPRQVAMYLAKTLTLRSLPEIGRRFGGRDHTTVLHAVRKIEGLVSKDTTLSDEVESLKRQLQE</sequence>
<proteinExistence type="inferred from homology"/>
<protein>
    <recommendedName>
        <fullName evidence="1">Chromosomal replication initiator protein DnaA</fullName>
    </recommendedName>
</protein>
<evidence type="ECO:0000255" key="1">
    <source>
        <dbReference type="HAMAP-Rule" id="MF_00377"/>
    </source>
</evidence>
<evidence type="ECO:0000256" key="2">
    <source>
        <dbReference type="SAM" id="MobiDB-lite"/>
    </source>
</evidence>
<gene>
    <name evidence="1" type="primary">dnaA</name>
    <name type="ordered locus">RPA0001</name>
</gene>
<organism>
    <name type="scientific">Rhodopseudomonas palustris (strain ATCC BAA-98 / CGA009)</name>
    <dbReference type="NCBI Taxonomy" id="258594"/>
    <lineage>
        <taxon>Bacteria</taxon>
        <taxon>Pseudomonadati</taxon>
        <taxon>Pseudomonadota</taxon>
        <taxon>Alphaproteobacteria</taxon>
        <taxon>Hyphomicrobiales</taxon>
        <taxon>Nitrobacteraceae</taxon>
        <taxon>Rhodopseudomonas</taxon>
    </lineage>
</organism>
<keyword id="KW-0067">ATP-binding</keyword>
<keyword id="KW-0963">Cytoplasm</keyword>
<keyword id="KW-0235">DNA replication</keyword>
<keyword id="KW-0238">DNA-binding</keyword>
<keyword id="KW-0446">Lipid-binding</keyword>
<keyword id="KW-0547">Nucleotide-binding</keyword>
<accession>Q6NDV3</accession>
<reference key="1">
    <citation type="journal article" date="2004" name="Nat. Biotechnol.">
        <title>Complete genome sequence of the metabolically versatile photosynthetic bacterium Rhodopseudomonas palustris.</title>
        <authorList>
            <person name="Larimer F.W."/>
            <person name="Chain P."/>
            <person name="Hauser L."/>
            <person name="Lamerdin J.E."/>
            <person name="Malfatti S."/>
            <person name="Do L."/>
            <person name="Land M.L."/>
            <person name="Pelletier D.A."/>
            <person name="Beatty J.T."/>
            <person name="Lang A.S."/>
            <person name="Tabita F.R."/>
            <person name="Gibson J.L."/>
            <person name="Hanson T.E."/>
            <person name="Bobst C."/>
            <person name="Torres y Torres J.L."/>
            <person name="Peres C."/>
            <person name="Harrison F.H."/>
            <person name="Gibson J."/>
            <person name="Harwood C.S."/>
        </authorList>
    </citation>
    <scope>NUCLEOTIDE SEQUENCE [LARGE SCALE GENOMIC DNA]</scope>
    <source>
        <strain>ATCC BAA-98 / CGA009</strain>
    </source>
</reference>
<comment type="function">
    <text evidence="1">Plays an essential role in the initiation and regulation of chromosomal replication. ATP-DnaA binds to the origin of replication (oriC) to initiate formation of the DNA replication initiation complex once per cell cycle. Binds the DnaA box (a 9 base pair repeat at the origin) and separates the double-stranded (ds)DNA. Forms a right-handed helical filament on oriC DNA; dsDNA binds to the exterior of the filament while single-stranded (ss)DNA is stabiized in the filament's interior. The ATP-DnaA-oriC complex binds and stabilizes one strand of the AT-rich DNA unwinding element (DUE), permitting loading of DNA polymerase. After initiation quickly degrades to an ADP-DnaA complex that is not apt for DNA replication. Binds acidic phospholipids.</text>
</comment>
<comment type="subunit">
    <text evidence="1">Oligomerizes as a right-handed, spiral filament on DNA at oriC.</text>
</comment>
<comment type="subcellular location">
    <subcellularLocation>
        <location evidence="1">Cytoplasm</location>
    </subcellularLocation>
</comment>
<comment type="domain">
    <text evidence="1">Domain I is involved in oligomerization and binding regulators, domain II is flexibile and of varying length in different bacteria, domain III forms the AAA+ region, while domain IV binds dsDNA.</text>
</comment>
<comment type="similarity">
    <text evidence="1">Belongs to the DnaA family.</text>
</comment>
<dbReference type="EMBL" id="BX572593">
    <property type="protein sequence ID" value="CAE25445.1"/>
    <property type="molecule type" value="Genomic_DNA"/>
</dbReference>
<dbReference type="RefSeq" id="WP_011155572.1">
    <property type="nucleotide sequence ID" value="NZ_CP116810.1"/>
</dbReference>
<dbReference type="SMR" id="Q6NDV3"/>
<dbReference type="STRING" id="258594.RPA0001"/>
<dbReference type="GeneID" id="66890999"/>
<dbReference type="eggNOG" id="COG0593">
    <property type="taxonomic scope" value="Bacteria"/>
</dbReference>
<dbReference type="HOGENOM" id="CLU_026910_3_0_5"/>
<dbReference type="PhylomeDB" id="Q6NDV3"/>
<dbReference type="GO" id="GO:0005737">
    <property type="term" value="C:cytoplasm"/>
    <property type="evidence" value="ECO:0007669"/>
    <property type="project" value="UniProtKB-SubCell"/>
</dbReference>
<dbReference type="GO" id="GO:0005886">
    <property type="term" value="C:plasma membrane"/>
    <property type="evidence" value="ECO:0007669"/>
    <property type="project" value="TreeGrafter"/>
</dbReference>
<dbReference type="GO" id="GO:0005524">
    <property type="term" value="F:ATP binding"/>
    <property type="evidence" value="ECO:0007669"/>
    <property type="project" value="UniProtKB-UniRule"/>
</dbReference>
<dbReference type="GO" id="GO:0016887">
    <property type="term" value="F:ATP hydrolysis activity"/>
    <property type="evidence" value="ECO:0007669"/>
    <property type="project" value="InterPro"/>
</dbReference>
<dbReference type="GO" id="GO:0003688">
    <property type="term" value="F:DNA replication origin binding"/>
    <property type="evidence" value="ECO:0007669"/>
    <property type="project" value="UniProtKB-UniRule"/>
</dbReference>
<dbReference type="GO" id="GO:0008289">
    <property type="term" value="F:lipid binding"/>
    <property type="evidence" value="ECO:0007669"/>
    <property type="project" value="UniProtKB-KW"/>
</dbReference>
<dbReference type="GO" id="GO:0006270">
    <property type="term" value="P:DNA replication initiation"/>
    <property type="evidence" value="ECO:0007669"/>
    <property type="project" value="UniProtKB-UniRule"/>
</dbReference>
<dbReference type="GO" id="GO:0006275">
    <property type="term" value="P:regulation of DNA replication"/>
    <property type="evidence" value="ECO:0007669"/>
    <property type="project" value="UniProtKB-UniRule"/>
</dbReference>
<dbReference type="CDD" id="cd00009">
    <property type="entry name" value="AAA"/>
    <property type="match status" value="1"/>
</dbReference>
<dbReference type="CDD" id="cd06571">
    <property type="entry name" value="Bac_DnaA_C"/>
    <property type="match status" value="1"/>
</dbReference>
<dbReference type="FunFam" id="1.10.1750.10:FF:000002">
    <property type="entry name" value="Chromosomal replication initiator protein DnaA"/>
    <property type="match status" value="1"/>
</dbReference>
<dbReference type="FunFam" id="3.40.50.300:FF:000668">
    <property type="entry name" value="Chromosomal replication initiator protein DnaA"/>
    <property type="match status" value="1"/>
</dbReference>
<dbReference type="Gene3D" id="1.10.1750.10">
    <property type="match status" value="1"/>
</dbReference>
<dbReference type="Gene3D" id="1.10.8.60">
    <property type="match status" value="1"/>
</dbReference>
<dbReference type="Gene3D" id="3.30.300.180">
    <property type="match status" value="1"/>
</dbReference>
<dbReference type="Gene3D" id="3.40.50.300">
    <property type="entry name" value="P-loop containing nucleotide triphosphate hydrolases"/>
    <property type="match status" value="1"/>
</dbReference>
<dbReference type="HAMAP" id="MF_00377">
    <property type="entry name" value="DnaA_bact"/>
    <property type="match status" value="1"/>
</dbReference>
<dbReference type="InterPro" id="IPR003593">
    <property type="entry name" value="AAA+_ATPase"/>
</dbReference>
<dbReference type="InterPro" id="IPR001957">
    <property type="entry name" value="Chromosome_initiator_DnaA"/>
</dbReference>
<dbReference type="InterPro" id="IPR020591">
    <property type="entry name" value="Chromosome_initiator_DnaA-like"/>
</dbReference>
<dbReference type="InterPro" id="IPR018312">
    <property type="entry name" value="Chromosome_initiator_DnaA_CS"/>
</dbReference>
<dbReference type="InterPro" id="IPR013159">
    <property type="entry name" value="DnaA_C"/>
</dbReference>
<dbReference type="InterPro" id="IPR013317">
    <property type="entry name" value="DnaA_dom"/>
</dbReference>
<dbReference type="InterPro" id="IPR024633">
    <property type="entry name" value="DnaA_N_dom"/>
</dbReference>
<dbReference type="InterPro" id="IPR038454">
    <property type="entry name" value="DnaA_N_sf"/>
</dbReference>
<dbReference type="InterPro" id="IPR027417">
    <property type="entry name" value="P-loop_NTPase"/>
</dbReference>
<dbReference type="InterPro" id="IPR010921">
    <property type="entry name" value="Trp_repressor/repl_initiator"/>
</dbReference>
<dbReference type="NCBIfam" id="TIGR00362">
    <property type="entry name" value="DnaA"/>
    <property type="match status" value="1"/>
</dbReference>
<dbReference type="PANTHER" id="PTHR30050">
    <property type="entry name" value="CHROMOSOMAL REPLICATION INITIATOR PROTEIN DNAA"/>
    <property type="match status" value="1"/>
</dbReference>
<dbReference type="PANTHER" id="PTHR30050:SF2">
    <property type="entry name" value="CHROMOSOMAL REPLICATION INITIATOR PROTEIN DNAA"/>
    <property type="match status" value="1"/>
</dbReference>
<dbReference type="Pfam" id="PF00308">
    <property type="entry name" value="Bac_DnaA"/>
    <property type="match status" value="1"/>
</dbReference>
<dbReference type="Pfam" id="PF08299">
    <property type="entry name" value="Bac_DnaA_C"/>
    <property type="match status" value="1"/>
</dbReference>
<dbReference type="Pfam" id="PF11638">
    <property type="entry name" value="DnaA_N"/>
    <property type="match status" value="1"/>
</dbReference>
<dbReference type="PRINTS" id="PR00051">
    <property type="entry name" value="DNAA"/>
</dbReference>
<dbReference type="SMART" id="SM00382">
    <property type="entry name" value="AAA"/>
    <property type="match status" value="1"/>
</dbReference>
<dbReference type="SMART" id="SM00760">
    <property type="entry name" value="Bac_DnaA_C"/>
    <property type="match status" value="1"/>
</dbReference>
<dbReference type="SUPFAM" id="SSF52540">
    <property type="entry name" value="P-loop containing nucleoside triphosphate hydrolases"/>
    <property type="match status" value="1"/>
</dbReference>
<dbReference type="SUPFAM" id="SSF48295">
    <property type="entry name" value="TrpR-like"/>
    <property type="match status" value="1"/>
</dbReference>
<dbReference type="PROSITE" id="PS01008">
    <property type="entry name" value="DNAA"/>
    <property type="match status" value="1"/>
</dbReference>